<feature type="signal peptide" evidence="8">
    <location>
        <begin position="1"/>
        <end position="18"/>
    </location>
</feature>
<feature type="chain" id="PRO_0000452425" description="Beta-toxin Ct7" evidence="8">
    <location>
        <begin position="19"/>
        <end position="81"/>
    </location>
</feature>
<feature type="propeptide" id="PRO_0000452426" evidence="1">
    <location>
        <position position="82"/>
    </location>
</feature>
<feature type="domain" description="LCN-type CS-alpha/beta" evidence="3">
    <location>
        <begin position="19"/>
        <end position="81"/>
    </location>
</feature>
<feature type="modified residue" description="Glycine amide" evidence="8">
    <location>
        <position position="81"/>
    </location>
</feature>
<feature type="disulfide bond" evidence="3">
    <location>
        <begin position="29"/>
        <end position="80"/>
    </location>
</feature>
<feature type="disulfide bond" evidence="3">
    <location>
        <begin position="33"/>
        <end position="54"/>
    </location>
</feature>
<feature type="disulfide bond" evidence="3">
    <location>
        <begin position="40"/>
        <end position="61"/>
    </location>
</feature>
<feature type="disulfide bond" evidence="3">
    <location>
        <begin position="44"/>
        <end position="63"/>
    </location>
</feature>
<keyword id="KW-0027">Amidation</keyword>
<keyword id="KW-0903">Direct protein sequencing</keyword>
<keyword id="KW-1015">Disulfide bond</keyword>
<keyword id="KW-0872">Ion channel impairing toxin</keyword>
<keyword id="KW-0528">Neurotoxin</keyword>
<keyword id="KW-0964">Secreted</keyword>
<keyword id="KW-0732">Signal</keyword>
<keyword id="KW-0800">Toxin</keyword>
<keyword id="KW-0738">Voltage-gated sodium channel impairing toxin</keyword>
<reference key="1">
    <citation type="journal article" date="2013" name="PLoS ONE">
        <title>Mass fingerprinting of the venom and transcriptome of venom gland of scorpion Centruroides tecomanus.</title>
        <authorList>
            <person name="Valdez-Velazquez L.L."/>
            <person name="Quintero-Hernandez V."/>
            <person name="Romero-Gutierrez M.T."/>
            <person name="Coronas F.I."/>
            <person name="Possani L.D."/>
        </authorList>
    </citation>
    <scope>NUCLEOTIDE SEQUENCE [MRNA]</scope>
    <scope>PROTEIN SEQUENCE OF 19-46</scope>
    <scope>PROBABLE AMIDATION AT GLY-81</scope>
    <scope>MASS SPECTROMETRY</scope>
    <scope>SUBCELLULAR LOCATION</scope>
    <source>
        <tissue>Venom</tissue>
        <tissue>Venom gland</tissue>
    </source>
</reference>
<reference key="2">
    <citation type="journal article" date="2016" name="Toxicon">
        <title>Comprehensive analysis of venom from the scorpion Centruroides tecomanus reveals compounds with antimicrobial, cytotoxic, and insecticidal activities.</title>
        <authorList>
            <person name="Valdez-Velazquez L.L."/>
            <person name="Romero-Gutierrez M.T."/>
            <person name="Delgado-Enciso I."/>
            <person name="Dobrovinskaya O."/>
            <person name="Melnikov V."/>
            <person name="Quintero-Hernandez V."/>
            <person name="Ceballos-Magana S.G."/>
            <person name="Gaitan-Hinojosa M.A."/>
            <person name="Coronas F.I."/>
            <person name="Puebla-Perez A.M."/>
            <person name="Zamudio F."/>
            <person name="De la Cruz-Garcia I."/>
            <person name="Vazquez-Vuelvas O.F."/>
            <person name="Soriano-Hernandez A.D."/>
            <person name="Possani L.D."/>
        </authorList>
    </citation>
    <scope>FUNCTION</scope>
    <source>
        <tissue>Venom</tissue>
    </source>
</reference>
<accession>P0DUH9</accession>
<proteinExistence type="evidence at protein level"/>
<comment type="function">
    <text evidence="2 5">Beta toxins bind voltage-independently at site-4 of sodium channels (Nav) and shift the voltage of activation toward more negative potentials thereby affecting sodium channel activation and promoting spontaneous and repetitive firing (By similarity). Is possibly toxic to mice, freshwater shrimp and crickets (PubMed:27130039).</text>
</comment>
<comment type="subcellular location">
    <subcellularLocation>
        <location evidence="4">Secreted</location>
    </subcellularLocation>
</comment>
<comment type="tissue specificity">
    <text evidence="8">Expressed by the venom gland.</text>
</comment>
<comment type="domain">
    <text evidence="7">Has the structural arrangement of an alpha-helix connected to antiparallel beta-sheets by disulfide bonds (CS-alpha/beta).</text>
</comment>
<comment type="mass spectrometry">
    <text>Average mass.</text>
</comment>
<comment type="similarity">
    <text evidence="7">Belongs to the long (4 C-C) scorpion toxin superfamily. Sodium channel inhibitor family. Beta subfamily.</text>
</comment>
<protein>
    <recommendedName>
        <fullName evidence="6">Beta-toxin Ct7</fullName>
    </recommendedName>
</protein>
<sequence>MKVLILIIASVLLIGVECKDGYPMNSEGCKISCVIGNTFCDTECKMLKASSGYCWTLGLACYCEGLPENVEVWDSATNKCGGK</sequence>
<organism>
    <name type="scientific">Centruroides tecomanus</name>
    <name type="common">Scorpion</name>
    <name type="synonym">Centruroides limpidus tecomanus</name>
    <dbReference type="NCBI Taxonomy" id="1028682"/>
    <lineage>
        <taxon>Eukaryota</taxon>
        <taxon>Metazoa</taxon>
        <taxon>Ecdysozoa</taxon>
        <taxon>Arthropoda</taxon>
        <taxon>Chelicerata</taxon>
        <taxon>Arachnida</taxon>
        <taxon>Scorpiones</taxon>
        <taxon>Buthida</taxon>
        <taxon>Buthoidea</taxon>
        <taxon>Buthidae</taxon>
        <taxon>Centruroides</taxon>
    </lineage>
</organism>
<evidence type="ECO:0000250" key="1">
    <source>
        <dbReference type="UniProtKB" id="E7CLP2"/>
    </source>
</evidence>
<evidence type="ECO:0000250" key="2">
    <source>
        <dbReference type="UniProtKB" id="P60266"/>
    </source>
</evidence>
<evidence type="ECO:0000255" key="3">
    <source>
        <dbReference type="PROSITE-ProRule" id="PRU01210"/>
    </source>
</evidence>
<evidence type="ECO:0000269" key="4">
    <source>
    </source>
</evidence>
<evidence type="ECO:0000269" key="5">
    <source>
    </source>
</evidence>
<evidence type="ECO:0000303" key="6">
    <source>
    </source>
</evidence>
<evidence type="ECO:0000305" key="7"/>
<evidence type="ECO:0000305" key="8">
    <source>
    </source>
</evidence>
<dbReference type="EMBL" id="JZ122271">
    <property type="status" value="NOT_ANNOTATED_CDS"/>
    <property type="molecule type" value="mRNA"/>
</dbReference>
<dbReference type="SMR" id="P0DUH9"/>
<dbReference type="GO" id="GO:0005576">
    <property type="term" value="C:extracellular region"/>
    <property type="evidence" value="ECO:0000314"/>
    <property type="project" value="UniProtKB"/>
</dbReference>
<dbReference type="GO" id="GO:0019871">
    <property type="term" value="F:sodium channel inhibitor activity"/>
    <property type="evidence" value="ECO:0007669"/>
    <property type="project" value="InterPro"/>
</dbReference>
<dbReference type="GO" id="GO:0090729">
    <property type="term" value="F:toxin activity"/>
    <property type="evidence" value="ECO:0007669"/>
    <property type="project" value="UniProtKB-KW"/>
</dbReference>
<dbReference type="GO" id="GO:0006952">
    <property type="term" value="P:defense response"/>
    <property type="evidence" value="ECO:0007669"/>
    <property type="project" value="InterPro"/>
</dbReference>
<dbReference type="CDD" id="cd23106">
    <property type="entry name" value="neurotoxins_LC_scorpion"/>
    <property type="match status" value="1"/>
</dbReference>
<dbReference type="FunFam" id="3.30.30.10:FF:000002">
    <property type="entry name" value="Alpha-like toxin BmK-M1"/>
    <property type="match status" value="1"/>
</dbReference>
<dbReference type="Gene3D" id="3.30.30.10">
    <property type="entry name" value="Knottin, scorpion toxin-like"/>
    <property type="match status" value="1"/>
</dbReference>
<dbReference type="InterPro" id="IPR044062">
    <property type="entry name" value="LCN-type_CS_alpha_beta_dom"/>
</dbReference>
<dbReference type="InterPro" id="IPR003614">
    <property type="entry name" value="Scorpion_toxin-like"/>
</dbReference>
<dbReference type="InterPro" id="IPR036574">
    <property type="entry name" value="Scorpion_toxin-like_sf"/>
</dbReference>
<dbReference type="InterPro" id="IPR018218">
    <property type="entry name" value="Scorpion_toxinL"/>
</dbReference>
<dbReference type="InterPro" id="IPR002061">
    <property type="entry name" value="Scorpion_toxinL/defensin"/>
</dbReference>
<dbReference type="Pfam" id="PF00537">
    <property type="entry name" value="Toxin_3"/>
    <property type="match status" value="1"/>
</dbReference>
<dbReference type="PRINTS" id="PR00285">
    <property type="entry name" value="SCORPNTOXIN"/>
</dbReference>
<dbReference type="SMART" id="SM00505">
    <property type="entry name" value="Knot1"/>
    <property type="match status" value="1"/>
</dbReference>
<dbReference type="SUPFAM" id="SSF57095">
    <property type="entry name" value="Scorpion toxin-like"/>
    <property type="match status" value="1"/>
</dbReference>
<dbReference type="PROSITE" id="PS51863">
    <property type="entry name" value="LCN_CSAB"/>
    <property type="match status" value="1"/>
</dbReference>
<name>SCX7_CENTE</name>